<accession>A0LPF9</accession>
<feature type="chain" id="PRO_0000386343" description="GTPase Obg">
    <location>
        <begin position="1"/>
        <end position="348"/>
    </location>
</feature>
<feature type="domain" description="Obg" evidence="2">
    <location>
        <begin position="1"/>
        <end position="159"/>
    </location>
</feature>
<feature type="domain" description="OBG-type G" evidence="1">
    <location>
        <begin position="160"/>
        <end position="331"/>
    </location>
</feature>
<feature type="binding site" evidence="1">
    <location>
        <begin position="166"/>
        <end position="173"/>
    </location>
    <ligand>
        <name>GTP</name>
        <dbReference type="ChEBI" id="CHEBI:37565"/>
    </ligand>
</feature>
<feature type="binding site" evidence="1">
    <location>
        <position position="173"/>
    </location>
    <ligand>
        <name>Mg(2+)</name>
        <dbReference type="ChEBI" id="CHEBI:18420"/>
    </ligand>
</feature>
<feature type="binding site" evidence="1">
    <location>
        <begin position="191"/>
        <end position="195"/>
    </location>
    <ligand>
        <name>GTP</name>
        <dbReference type="ChEBI" id="CHEBI:37565"/>
    </ligand>
</feature>
<feature type="binding site" evidence="1">
    <location>
        <position position="193"/>
    </location>
    <ligand>
        <name>Mg(2+)</name>
        <dbReference type="ChEBI" id="CHEBI:18420"/>
    </ligand>
</feature>
<feature type="binding site" evidence="1">
    <location>
        <begin position="213"/>
        <end position="216"/>
    </location>
    <ligand>
        <name>GTP</name>
        <dbReference type="ChEBI" id="CHEBI:37565"/>
    </ligand>
</feature>
<feature type="binding site" evidence="1">
    <location>
        <begin position="283"/>
        <end position="286"/>
    </location>
    <ligand>
        <name>GTP</name>
        <dbReference type="ChEBI" id="CHEBI:37565"/>
    </ligand>
</feature>
<feature type="binding site" evidence="1">
    <location>
        <begin position="312"/>
        <end position="314"/>
    </location>
    <ligand>
        <name>GTP</name>
        <dbReference type="ChEBI" id="CHEBI:37565"/>
    </ligand>
</feature>
<evidence type="ECO:0000255" key="1">
    <source>
        <dbReference type="HAMAP-Rule" id="MF_01454"/>
    </source>
</evidence>
<evidence type="ECO:0000255" key="2">
    <source>
        <dbReference type="PROSITE-ProRule" id="PRU01231"/>
    </source>
</evidence>
<proteinExistence type="inferred from homology"/>
<sequence>MKFVDEVKVHVLSGNGGNGCVSFRREKYVPRGGPDGGDGGEGGSVIFVASEGKNTLLDFRYRHLFKAESGKHGQGRNRHGKGGRDLVLEVPAGTVIKDAETGEPLVDLSHPGDRWVAARGGRGGRGNARFVSSTRQAPRIAEDGREGEDRELVLELKLMADVGLVGLPNAGKSTLISVVSAARPRIADYPFTTLIPCLGVVRHGEAPPFVMADIPGLIEGAHDGAGLGIRFLRHIERTRILAHLVDISQLSPEEPLRPYRLIESELASYSARLGEKKRVIVLNKVDLVPERDRLEALVSRYEQLGHPVFPVSARTKEGLGELLSALVRILSESGVSLPVEDVEEHVGK</sequence>
<dbReference type="EC" id="3.6.5.-" evidence="1"/>
<dbReference type="EMBL" id="CP000478">
    <property type="protein sequence ID" value="ABK19311.1"/>
    <property type="molecule type" value="Genomic_DNA"/>
</dbReference>
<dbReference type="RefSeq" id="WP_011700436.1">
    <property type="nucleotide sequence ID" value="NC_008554.1"/>
</dbReference>
<dbReference type="SMR" id="A0LPF9"/>
<dbReference type="FunCoup" id="A0LPF9">
    <property type="interactions" value="531"/>
</dbReference>
<dbReference type="STRING" id="335543.Sfum_3641"/>
<dbReference type="KEGG" id="sfu:Sfum_3641"/>
<dbReference type="eggNOG" id="COG0536">
    <property type="taxonomic scope" value="Bacteria"/>
</dbReference>
<dbReference type="HOGENOM" id="CLU_011747_2_0_7"/>
<dbReference type="InParanoid" id="A0LPF9"/>
<dbReference type="OrthoDB" id="9807318at2"/>
<dbReference type="Proteomes" id="UP000001784">
    <property type="component" value="Chromosome"/>
</dbReference>
<dbReference type="GO" id="GO:0005737">
    <property type="term" value="C:cytoplasm"/>
    <property type="evidence" value="ECO:0007669"/>
    <property type="project" value="UniProtKB-SubCell"/>
</dbReference>
<dbReference type="GO" id="GO:0005525">
    <property type="term" value="F:GTP binding"/>
    <property type="evidence" value="ECO:0007669"/>
    <property type="project" value="UniProtKB-UniRule"/>
</dbReference>
<dbReference type="GO" id="GO:0003924">
    <property type="term" value="F:GTPase activity"/>
    <property type="evidence" value="ECO:0007669"/>
    <property type="project" value="UniProtKB-UniRule"/>
</dbReference>
<dbReference type="GO" id="GO:0000287">
    <property type="term" value="F:magnesium ion binding"/>
    <property type="evidence" value="ECO:0007669"/>
    <property type="project" value="InterPro"/>
</dbReference>
<dbReference type="GO" id="GO:0042254">
    <property type="term" value="P:ribosome biogenesis"/>
    <property type="evidence" value="ECO:0007669"/>
    <property type="project" value="UniProtKB-UniRule"/>
</dbReference>
<dbReference type="CDD" id="cd01898">
    <property type="entry name" value="Obg"/>
    <property type="match status" value="1"/>
</dbReference>
<dbReference type="FunFam" id="2.70.210.12:FF:000001">
    <property type="entry name" value="GTPase Obg"/>
    <property type="match status" value="1"/>
</dbReference>
<dbReference type="Gene3D" id="2.70.210.12">
    <property type="entry name" value="GTP1/OBG domain"/>
    <property type="match status" value="1"/>
</dbReference>
<dbReference type="Gene3D" id="3.40.50.300">
    <property type="entry name" value="P-loop containing nucleotide triphosphate hydrolases"/>
    <property type="match status" value="1"/>
</dbReference>
<dbReference type="HAMAP" id="MF_01454">
    <property type="entry name" value="GTPase_Obg"/>
    <property type="match status" value="1"/>
</dbReference>
<dbReference type="InterPro" id="IPR031167">
    <property type="entry name" value="G_OBG"/>
</dbReference>
<dbReference type="InterPro" id="IPR006073">
    <property type="entry name" value="GTP-bd"/>
</dbReference>
<dbReference type="InterPro" id="IPR014100">
    <property type="entry name" value="GTP-bd_Obg/CgtA"/>
</dbReference>
<dbReference type="InterPro" id="IPR006074">
    <property type="entry name" value="GTP1-OBG_CS"/>
</dbReference>
<dbReference type="InterPro" id="IPR006169">
    <property type="entry name" value="GTP1_OBG_dom"/>
</dbReference>
<dbReference type="InterPro" id="IPR036726">
    <property type="entry name" value="GTP1_OBG_dom_sf"/>
</dbReference>
<dbReference type="InterPro" id="IPR045086">
    <property type="entry name" value="OBG_GTPase"/>
</dbReference>
<dbReference type="InterPro" id="IPR027417">
    <property type="entry name" value="P-loop_NTPase"/>
</dbReference>
<dbReference type="NCBIfam" id="TIGR02729">
    <property type="entry name" value="Obg_CgtA"/>
    <property type="match status" value="1"/>
</dbReference>
<dbReference type="NCBIfam" id="NF008954">
    <property type="entry name" value="PRK12296.1"/>
    <property type="match status" value="1"/>
</dbReference>
<dbReference type="NCBIfam" id="NF008955">
    <property type="entry name" value="PRK12297.1"/>
    <property type="match status" value="1"/>
</dbReference>
<dbReference type="NCBIfam" id="NF008956">
    <property type="entry name" value="PRK12299.1"/>
    <property type="match status" value="1"/>
</dbReference>
<dbReference type="PANTHER" id="PTHR11702">
    <property type="entry name" value="DEVELOPMENTALLY REGULATED GTP-BINDING PROTEIN-RELATED"/>
    <property type="match status" value="1"/>
</dbReference>
<dbReference type="PANTHER" id="PTHR11702:SF31">
    <property type="entry name" value="MITOCHONDRIAL RIBOSOME-ASSOCIATED GTPASE 2"/>
    <property type="match status" value="1"/>
</dbReference>
<dbReference type="Pfam" id="PF01018">
    <property type="entry name" value="GTP1_OBG"/>
    <property type="match status" value="1"/>
</dbReference>
<dbReference type="Pfam" id="PF01926">
    <property type="entry name" value="MMR_HSR1"/>
    <property type="match status" value="1"/>
</dbReference>
<dbReference type="PIRSF" id="PIRSF002401">
    <property type="entry name" value="GTP_bd_Obg/CgtA"/>
    <property type="match status" value="1"/>
</dbReference>
<dbReference type="PRINTS" id="PR00326">
    <property type="entry name" value="GTP1OBG"/>
</dbReference>
<dbReference type="SUPFAM" id="SSF82051">
    <property type="entry name" value="Obg GTP-binding protein N-terminal domain"/>
    <property type="match status" value="1"/>
</dbReference>
<dbReference type="SUPFAM" id="SSF52540">
    <property type="entry name" value="P-loop containing nucleoside triphosphate hydrolases"/>
    <property type="match status" value="1"/>
</dbReference>
<dbReference type="PROSITE" id="PS51710">
    <property type="entry name" value="G_OBG"/>
    <property type="match status" value="1"/>
</dbReference>
<dbReference type="PROSITE" id="PS00905">
    <property type="entry name" value="GTP1_OBG"/>
    <property type="match status" value="1"/>
</dbReference>
<dbReference type="PROSITE" id="PS51883">
    <property type="entry name" value="OBG"/>
    <property type="match status" value="1"/>
</dbReference>
<name>OBG_SYNFM</name>
<keyword id="KW-0963">Cytoplasm</keyword>
<keyword id="KW-0342">GTP-binding</keyword>
<keyword id="KW-0378">Hydrolase</keyword>
<keyword id="KW-0460">Magnesium</keyword>
<keyword id="KW-0479">Metal-binding</keyword>
<keyword id="KW-0547">Nucleotide-binding</keyword>
<keyword id="KW-1185">Reference proteome</keyword>
<organism>
    <name type="scientific">Syntrophobacter fumaroxidans (strain DSM 10017 / MPOB)</name>
    <dbReference type="NCBI Taxonomy" id="335543"/>
    <lineage>
        <taxon>Bacteria</taxon>
        <taxon>Pseudomonadati</taxon>
        <taxon>Thermodesulfobacteriota</taxon>
        <taxon>Syntrophobacteria</taxon>
        <taxon>Syntrophobacterales</taxon>
        <taxon>Syntrophobacteraceae</taxon>
        <taxon>Syntrophobacter</taxon>
    </lineage>
</organism>
<comment type="function">
    <text evidence="1">An essential GTPase which binds GTP, GDP and possibly (p)ppGpp with moderate affinity, with high nucleotide exchange rates and a fairly low GTP hydrolysis rate. Plays a role in control of the cell cycle, stress response, ribosome biogenesis and in those bacteria that undergo differentiation, in morphogenesis control.</text>
</comment>
<comment type="cofactor">
    <cofactor evidence="1">
        <name>Mg(2+)</name>
        <dbReference type="ChEBI" id="CHEBI:18420"/>
    </cofactor>
</comment>
<comment type="subunit">
    <text evidence="1">Monomer.</text>
</comment>
<comment type="subcellular location">
    <subcellularLocation>
        <location evidence="1">Cytoplasm</location>
    </subcellularLocation>
</comment>
<comment type="similarity">
    <text evidence="1">Belongs to the TRAFAC class OBG-HflX-like GTPase superfamily. OBG GTPase family.</text>
</comment>
<protein>
    <recommendedName>
        <fullName evidence="1">GTPase Obg</fullName>
        <ecNumber evidence="1">3.6.5.-</ecNumber>
    </recommendedName>
    <alternativeName>
        <fullName evidence="1">GTP-binding protein Obg</fullName>
    </alternativeName>
</protein>
<reference key="1">
    <citation type="submission" date="2006-10" db="EMBL/GenBank/DDBJ databases">
        <title>Complete sequence of Syntrophobacter fumaroxidans MPOB.</title>
        <authorList>
            <consortium name="US DOE Joint Genome Institute"/>
            <person name="Copeland A."/>
            <person name="Lucas S."/>
            <person name="Lapidus A."/>
            <person name="Barry K."/>
            <person name="Detter J.C."/>
            <person name="Glavina del Rio T."/>
            <person name="Hammon N."/>
            <person name="Israni S."/>
            <person name="Pitluck S."/>
            <person name="Goltsman E.G."/>
            <person name="Martinez M."/>
            <person name="Schmutz J."/>
            <person name="Larimer F."/>
            <person name="Land M."/>
            <person name="Hauser L."/>
            <person name="Kyrpides N."/>
            <person name="Kim E."/>
            <person name="Boone D.R."/>
            <person name="Brockman F."/>
            <person name="Culley D."/>
            <person name="Ferry J."/>
            <person name="Gunsalus R."/>
            <person name="McInerney M.J."/>
            <person name="Morrison M."/>
            <person name="Plugge C."/>
            <person name="Rohlin L."/>
            <person name="Scholten J."/>
            <person name="Sieber J."/>
            <person name="Stams A.J.M."/>
            <person name="Worm P."/>
            <person name="Henstra A.M."/>
            <person name="Richardson P."/>
        </authorList>
    </citation>
    <scope>NUCLEOTIDE SEQUENCE [LARGE SCALE GENOMIC DNA]</scope>
    <source>
        <strain>DSM 10017 / MPOB</strain>
    </source>
</reference>
<gene>
    <name evidence="1" type="primary">obg</name>
    <name type="ordered locus">Sfum_3641</name>
</gene>